<protein>
    <recommendedName>
        <fullName evidence="1">Adenosylhomocysteinase</fullName>
        <ecNumber evidence="1">3.13.2.1</ecNumber>
    </recommendedName>
    <alternativeName>
        <fullName evidence="1">S-adenosyl-L-homocysteine hydrolase</fullName>
        <shortName evidence="1">AdoHcyase</shortName>
    </alternativeName>
</protein>
<reference key="1">
    <citation type="journal article" date="2007" name="Environ. Microbiol.">
        <title>Whole-genome analysis of the ammonia-oxidizing bacterium, Nitrosomonas eutropha C91: implications for niche adaptation.</title>
        <authorList>
            <person name="Stein L.Y."/>
            <person name="Arp D.J."/>
            <person name="Berube P.M."/>
            <person name="Chain P.S."/>
            <person name="Hauser L."/>
            <person name="Jetten M.S."/>
            <person name="Klotz M.G."/>
            <person name="Larimer F.W."/>
            <person name="Norton J.M."/>
            <person name="Op den Camp H.J.M."/>
            <person name="Shin M."/>
            <person name="Wei X."/>
        </authorList>
    </citation>
    <scope>NUCLEOTIDE SEQUENCE [LARGE SCALE GENOMIC DNA]</scope>
    <source>
        <strain>DSM 101675 / C91 / Nm57</strain>
    </source>
</reference>
<proteinExistence type="inferred from homology"/>
<accession>Q0AEV8</accession>
<gene>
    <name evidence="1" type="primary">ahcY</name>
    <name type="ordered locus">Neut_1892</name>
</gene>
<dbReference type="EC" id="3.13.2.1" evidence="1"/>
<dbReference type="EMBL" id="CP000450">
    <property type="protein sequence ID" value="ABI60124.1"/>
    <property type="molecule type" value="Genomic_DNA"/>
</dbReference>
<dbReference type="RefSeq" id="WP_011634926.1">
    <property type="nucleotide sequence ID" value="NC_008344.1"/>
</dbReference>
<dbReference type="SMR" id="Q0AEV8"/>
<dbReference type="STRING" id="335283.Neut_1892"/>
<dbReference type="KEGG" id="net:Neut_1892"/>
<dbReference type="eggNOG" id="COG0499">
    <property type="taxonomic scope" value="Bacteria"/>
</dbReference>
<dbReference type="HOGENOM" id="CLU_025194_2_1_4"/>
<dbReference type="OrthoDB" id="9802717at2"/>
<dbReference type="UniPathway" id="UPA00314">
    <property type="reaction ID" value="UER00076"/>
</dbReference>
<dbReference type="Proteomes" id="UP000001966">
    <property type="component" value="Chromosome"/>
</dbReference>
<dbReference type="GO" id="GO:0005829">
    <property type="term" value="C:cytosol"/>
    <property type="evidence" value="ECO:0007669"/>
    <property type="project" value="TreeGrafter"/>
</dbReference>
<dbReference type="GO" id="GO:0004013">
    <property type="term" value="F:adenosylhomocysteinase activity"/>
    <property type="evidence" value="ECO:0007669"/>
    <property type="project" value="UniProtKB-UniRule"/>
</dbReference>
<dbReference type="GO" id="GO:0071269">
    <property type="term" value="P:L-homocysteine biosynthetic process"/>
    <property type="evidence" value="ECO:0007669"/>
    <property type="project" value="UniProtKB-UniRule"/>
</dbReference>
<dbReference type="GO" id="GO:0006730">
    <property type="term" value="P:one-carbon metabolic process"/>
    <property type="evidence" value="ECO:0007669"/>
    <property type="project" value="UniProtKB-KW"/>
</dbReference>
<dbReference type="GO" id="GO:0033353">
    <property type="term" value="P:S-adenosylmethionine cycle"/>
    <property type="evidence" value="ECO:0007669"/>
    <property type="project" value="TreeGrafter"/>
</dbReference>
<dbReference type="CDD" id="cd00401">
    <property type="entry name" value="SAHH"/>
    <property type="match status" value="1"/>
</dbReference>
<dbReference type="FunFam" id="3.40.50.720:FF:000004">
    <property type="entry name" value="Adenosylhomocysteinase"/>
    <property type="match status" value="1"/>
</dbReference>
<dbReference type="Gene3D" id="3.40.50.1480">
    <property type="entry name" value="Adenosylhomocysteinase-like"/>
    <property type="match status" value="1"/>
</dbReference>
<dbReference type="Gene3D" id="3.40.50.720">
    <property type="entry name" value="NAD(P)-binding Rossmann-like Domain"/>
    <property type="match status" value="1"/>
</dbReference>
<dbReference type="HAMAP" id="MF_00563">
    <property type="entry name" value="AdoHcyase"/>
    <property type="match status" value="1"/>
</dbReference>
<dbReference type="InterPro" id="IPR042172">
    <property type="entry name" value="Adenosylhomocyst_ase-like_sf"/>
</dbReference>
<dbReference type="InterPro" id="IPR000043">
    <property type="entry name" value="Adenosylhomocysteinase-like"/>
</dbReference>
<dbReference type="InterPro" id="IPR015878">
    <property type="entry name" value="Ado_hCys_hydrolase_NAD-bd"/>
</dbReference>
<dbReference type="InterPro" id="IPR036291">
    <property type="entry name" value="NAD(P)-bd_dom_sf"/>
</dbReference>
<dbReference type="InterPro" id="IPR020082">
    <property type="entry name" value="S-Ado-L-homoCys_hydrolase_CS"/>
</dbReference>
<dbReference type="NCBIfam" id="TIGR00936">
    <property type="entry name" value="ahcY"/>
    <property type="match status" value="1"/>
</dbReference>
<dbReference type="NCBIfam" id="NF004005">
    <property type="entry name" value="PRK05476.2-3"/>
    <property type="match status" value="1"/>
</dbReference>
<dbReference type="PANTHER" id="PTHR23420">
    <property type="entry name" value="ADENOSYLHOMOCYSTEINASE"/>
    <property type="match status" value="1"/>
</dbReference>
<dbReference type="PANTHER" id="PTHR23420:SF0">
    <property type="entry name" value="ADENOSYLHOMOCYSTEINASE"/>
    <property type="match status" value="1"/>
</dbReference>
<dbReference type="Pfam" id="PF05221">
    <property type="entry name" value="AdoHcyase"/>
    <property type="match status" value="1"/>
</dbReference>
<dbReference type="Pfam" id="PF00670">
    <property type="entry name" value="AdoHcyase_NAD"/>
    <property type="match status" value="1"/>
</dbReference>
<dbReference type="PIRSF" id="PIRSF001109">
    <property type="entry name" value="Ad_hcy_hydrolase"/>
    <property type="match status" value="1"/>
</dbReference>
<dbReference type="SMART" id="SM00996">
    <property type="entry name" value="AdoHcyase"/>
    <property type="match status" value="1"/>
</dbReference>
<dbReference type="SMART" id="SM00997">
    <property type="entry name" value="AdoHcyase_NAD"/>
    <property type="match status" value="1"/>
</dbReference>
<dbReference type="SUPFAM" id="SSF52283">
    <property type="entry name" value="Formate/glycerate dehydrogenase catalytic domain-like"/>
    <property type="match status" value="1"/>
</dbReference>
<dbReference type="SUPFAM" id="SSF51735">
    <property type="entry name" value="NAD(P)-binding Rossmann-fold domains"/>
    <property type="match status" value="1"/>
</dbReference>
<dbReference type="PROSITE" id="PS00738">
    <property type="entry name" value="ADOHCYASE_1"/>
    <property type="match status" value="1"/>
</dbReference>
<dbReference type="PROSITE" id="PS00739">
    <property type="entry name" value="ADOHCYASE_2"/>
    <property type="match status" value="1"/>
</dbReference>
<name>SAHH_NITEC</name>
<keyword id="KW-0963">Cytoplasm</keyword>
<keyword id="KW-0378">Hydrolase</keyword>
<keyword id="KW-0520">NAD</keyword>
<keyword id="KW-0554">One-carbon metabolism</keyword>
<feature type="chain" id="PRO_1000024739" description="Adenosylhomocysteinase">
    <location>
        <begin position="1"/>
        <end position="478"/>
    </location>
</feature>
<feature type="binding site" evidence="1">
    <location>
        <position position="67"/>
    </location>
    <ligand>
        <name>substrate</name>
    </ligand>
</feature>
<feature type="binding site" evidence="1">
    <location>
        <position position="144"/>
    </location>
    <ligand>
        <name>substrate</name>
    </ligand>
</feature>
<feature type="binding site" evidence="1">
    <location>
        <position position="204"/>
    </location>
    <ligand>
        <name>substrate</name>
    </ligand>
</feature>
<feature type="binding site" evidence="1">
    <location>
        <begin position="205"/>
        <end position="207"/>
    </location>
    <ligand>
        <name>NAD(+)</name>
        <dbReference type="ChEBI" id="CHEBI:57540"/>
    </ligand>
</feature>
<feature type="binding site" evidence="1">
    <location>
        <position position="234"/>
    </location>
    <ligand>
        <name>substrate</name>
    </ligand>
</feature>
<feature type="binding site" evidence="1">
    <location>
        <position position="238"/>
    </location>
    <ligand>
        <name>substrate</name>
    </ligand>
</feature>
<feature type="binding site" evidence="1">
    <location>
        <position position="239"/>
    </location>
    <ligand>
        <name>NAD(+)</name>
        <dbReference type="ChEBI" id="CHEBI:57540"/>
    </ligand>
</feature>
<feature type="binding site" evidence="1">
    <location>
        <begin position="268"/>
        <end position="273"/>
    </location>
    <ligand>
        <name>NAD(+)</name>
        <dbReference type="ChEBI" id="CHEBI:57540"/>
    </ligand>
</feature>
<feature type="binding site" evidence="1">
    <location>
        <position position="291"/>
    </location>
    <ligand>
        <name>NAD(+)</name>
        <dbReference type="ChEBI" id="CHEBI:57540"/>
    </ligand>
</feature>
<feature type="binding site" evidence="1">
    <location>
        <position position="326"/>
    </location>
    <ligand>
        <name>NAD(+)</name>
        <dbReference type="ChEBI" id="CHEBI:57540"/>
    </ligand>
</feature>
<feature type="binding site" evidence="1">
    <location>
        <begin position="347"/>
        <end position="349"/>
    </location>
    <ligand>
        <name>NAD(+)</name>
        <dbReference type="ChEBI" id="CHEBI:57540"/>
    </ligand>
</feature>
<feature type="binding site" evidence="1">
    <location>
        <position position="392"/>
    </location>
    <ligand>
        <name>NAD(+)</name>
        <dbReference type="ChEBI" id="CHEBI:57540"/>
    </ligand>
</feature>
<evidence type="ECO:0000255" key="1">
    <source>
        <dbReference type="HAMAP-Rule" id="MF_00563"/>
    </source>
</evidence>
<sequence>MSATINPVVDNSVFTDCEVADLSLADWGRKEIAIAETEMPGLMALREQYAGKKPLAGARIAGSLHMTIQTAVLIETLVALGAEVRWASCNIFSTQDHAAAAIAARDIPVFAYKGESLKEYWDYAHQIFEWTSDGSHAANMILDDGGDATLLLILGSRAERDPSVIANPSNEEEQVLFASIRSRLTSHPGWYSRNLAGIRGVTEETTTGVHRLYEMEKKGELPFPAINVNDSVTKSKFDNLYGCRESLVDGIKRATDVMIAGKIAVICGYGDVGKGCAQSLRGLGATVWITEIDPICALQAAMEGYRVVTMDDACDKADIFVTATGNLRVITHDHMLKMKNQAIVCNIGHFDSEIDIASVQKYQWENIKPQVDHVIFPTGRRIIVLAQGRLVNLGCATGHPSFVMSSSFTNQVLAQMELWQNGKDYQKKVYVLPKQLDEMVARLHLGKLGVKLTELTDEQAHYLNLDKNGPYKPEMYRY</sequence>
<comment type="function">
    <text evidence="1">May play a key role in the regulation of the intracellular concentration of adenosylhomocysteine.</text>
</comment>
<comment type="catalytic activity">
    <reaction evidence="1">
        <text>S-adenosyl-L-homocysteine + H2O = L-homocysteine + adenosine</text>
        <dbReference type="Rhea" id="RHEA:21708"/>
        <dbReference type="ChEBI" id="CHEBI:15377"/>
        <dbReference type="ChEBI" id="CHEBI:16335"/>
        <dbReference type="ChEBI" id="CHEBI:57856"/>
        <dbReference type="ChEBI" id="CHEBI:58199"/>
        <dbReference type="EC" id="3.13.2.1"/>
    </reaction>
</comment>
<comment type="cofactor">
    <cofactor evidence="1">
        <name>NAD(+)</name>
        <dbReference type="ChEBI" id="CHEBI:57540"/>
    </cofactor>
    <text evidence="1">Binds 1 NAD(+) per subunit.</text>
</comment>
<comment type="pathway">
    <text evidence="1">Amino-acid biosynthesis; L-homocysteine biosynthesis; L-homocysteine from S-adenosyl-L-homocysteine: step 1/1.</text>
</comment>
<comment type="subcellular location">
    <subcellularLocation>
        <location evidence="1">Cytoplasm</location>
    </subcellularLocation>
</comment>
<comment type="similarity">
    <text evidence="1">Belongs to the adenosylhomocysteinase family.</text>
</comment>
<organism>
    <name type="scientific">Nitrosomonas eutropha (strain DSM 101675 / C91 / Nm57)</name>
    <dbReference type="NCBI Taxonomy" id="335283"/>
    <lineage>
        <taxon>Bacteria</taxon>
        <taxon>Pseudomonadati</taxon>
        <taxon>Pseudomonadota</taxon>
        <taxon>Betaproteobacteria</taxon>
        <taxon>Nitrosomonadales</taxon>
        <taxon>Nitrosomonadaceae</taxon>
        <taxon>Nitrosomonas</taxon>
    </lineage>
</organism>